<sequence>MAADKPADQGAEKHEGAGQSSGVTDQEKELSASALQAFTSGNYDACLQHLACLQDINKDDYKIILNTAVAEFFKNNQTTTDNLRQTLNQLKNQVHSAVEEMDGLDDVENSMLYYNQAVILYHLRQYTEAISVGEKLYQFIEPFEEKFAQAVCFLLVDLYILTHQAEKALHLLAVLEKMISQGSGGKNGKNETGNNSSKDGSNPKAESAALIEAAKSKIHQYKVRGYIQMKSLKACKREIKSVMNTAGNSAPSLFLKSNFEYLRGNYRKAVKLLNSSNIAEHPGFMKTGECLRCMFWNNLGCIHFAMSKHNLGIFYFKKALQENDNVCAQLSAGGTDPGKKFSGRPMCTLLTNKRYELLYNCGIQLLHVGRPLAAFECLIEAVQVYHANPRLWLRLAECCIAANKGTSEQETKGLPTKKGIVQSIVGQGYHRKIVLASQSIQNTVYNDGQSSAIPVASVEFAAICLRNALLLLPEEQQDPKQENGSKSSSQLGGNTESSESSETCSSKSHDGDKFIPAPPSSPLRKQELENLKCSILACSAYVALALGDNLMALNHADQLLQQPKLSGSLKFLGHLYAAEALISLDRISDAITHLNPENVTDVSLGISSNEQDQGSDKGENEAMESSGKRAPQCYPSSVNSARTVMLFNLGSAYCLRSEYDKARKCLHQAASMIHPKEVPPEAILLAVYLELQNGNTQLALQMIKRNQLLPAVKAHSDVRKKTVFQPVHPIQPIQMPAFTTVQRK</sequence>
<evidence type="ECO:0000250" key="1"/>
<evidence type="ECO:0000250" key="2">
    <source>
        <dbReference type="UniProtKB" id="Q9H9A5"/>
    </source>
</evidence>
<evidence type="ECO:0000255" key="3"/>
<evidence type="ECO:0000256" key="4">
    <source>
        <dbReference type="SAM" id="MobiDB-lite"/>
    </source>
</evidence>
<evidence type="ECO:0000303" key="5">
    <source>
    </source>
</evidence>
<evidence type="ECO:0000303" key="6">
    <source>
    </source>
</evidence>
<evidence type="ECO:0000305" key="7"/>
<dbReference type="EMBL" id="AK029103">
    <property type="protein sequence ID" value="BAC26299.1"/>
    <property type="molecule type" value="mRNA"/>
</dbReference>
<dbReference type="EMBL" id="AK149944">
    <property type="protein sequence ID" value="BAE29186.1"/>
    <property type="molecule type" value="mRNA"/>
</dbReference>
<dbReference type="EMBL" id="AK161842">
    <property type="protein sequence ID" value="BAE36601.1"/>
    <property type="molecule type" value="mRNA"/>
</dbReference>
<dbReference type="EMBL" id="BC025554">
    <property type="protein sequence ID" value="AAH25554.1"/>
    <property type="molecule type" value="mRNA"/>
</dbReference>
<dbReference type="EMBL" id="BC036179">
    <property type="protein sequence ID" value="AAH36179.1"/>
    <property type="molecule type" value="mRNA"/>
</dbReference>
<dbReference type="EMBL" id="BC039183">
    <property type="protein sequence ID" value="AAH39183.1"/>
    <property type="molecule type" value="mRNA"/>
</dbReference>
<dbReference type="EMBL" id="BC047204">
    <property type="protein sequence ID" value="AAH47204.1"/>
    <property type="molecule type" value="mRNA"/>
</dbReference>
<dbReference type="CCDS" id="CCDS40794.1">
    <molecule id="Q8BH15-1"/>
</dbReference>
<dbReference type="RefSeq" id="NP_705813.2">
    <molecule id="Q8BH15-1"/>
    <property type="nucleotide sequence ID" value="NM_153585.5"/>
</dbReference>
<dbReference type="RefSeq" id="XP_006512462.1">
    <molecule id="Q8BH15-2"/>
    <property type="nucleotide sequence ID" value="XM_006512399.4"/>
</dbReference>
<dbReference type="SMR" id="Q8BH15"/>
<dbReference type="BioGRID" id="219688">
    <property type="interactions" value="1"/>
</dbReference>
<dbReference type="FunCoup" id="Q8BH15">
    <property type="interactions" value="1440"/>
</dbReference>
<dbReference type="IntAct" id="Q8BH15">
    <property type="interactions" value="1"/>
</dbReference>
<dbReference type="STRING" id="10090.ENSMUSP00000064840"/>
<dbReference type="GlyGen" id="Q8BH15">
    <property type="glycosylation" value="3 sites, 1 N-linked glycan (1 site), 1 O-linked glycan (2 sites)"/>
</dbReference>
<dbReference type="iPTMnet" id="Q8BH15"/>
<dbReference type="PhosphoSitePlus" id="Q8BH15"/>
<dbReference type="SwissPalm" id="Q8BH15"/>
<dbReference type="PaxDb" id="10090-ENSMUSP00000064840"/>
<dbReference type="PeptideAtlas" id="Q8BH15"/>
<dbReference type="ProteomicsDB" id="285513">
    <molecule id="Q8BH15-1"/>
</dbReference>
<dbReference type="ProteomicsDB" id="285514">
    <molecule id="Q8BH15-2"/>
</dbReference>
<dbReference type="ProteomicsDB" id="285515">
    <molecule id="Q8BH15-3"/>
</dbReference>
<dbReference type="ProteomicsDB" id="285516">
    <molecule id="Q8BH15-4"/>
</dbReference>
<dbReference type="ProteomicsDB" id="285517">
    <molecule id="Q8BH15-5"/>
</dbReference>
<dbReference type="ProteomicsDB" id="285518">
    <molecule id="Q8BH15-6"/>
</dbReference>
<dbReference type="Pumba" id="Q8BH15"/>
<dbReference type="Antibodypedia" id="27780">
    <property type="antibodies" value="90 antibodies from 23 providers"/>
</dbReference>
<dbReference type="Ensembl" id="ENSMUST00000070117.8">
    <molecule id="Q8BH15-1"/>
    <property type="protein sequence ID" value="ENSMUSP00000064840.7"/>
    <property type="gene ID" value="ENSMUSG00000056167.9"/>
</dbReference>
<dbReference type="GeneID" id="78893"/>
<dbReference type="KEGG" id="mmu:78893"/>
<dbReference type="UCSC" id="uc009rxq.2">
    <molecule id="Q8BH15-1"/>
    <property type="organism name" value="mouse"/>
</dbReference>
<dbReference type="UCSC" id="uc009rxr.2">
    <molecule id="Q8BH15-2"/>
    <property type="organism name" value="mouse"/>
</dbReference>
<dbReference type="UCSC" id="uc009rxv.2">
    <molecule id="Q8BH15-5"/>
    <property type="organism name" value="mouse"/>
</dbReference>
<dbReference type="AGR" id="MGI:1926143"/>
<dbReference type="CTD" id="25904"/>
<dbReference type="MGI" id="MGI:1926143">
    <property type="gene designation" value="Cnot10"/>
</dbReference>
<dbReference type="VEuPathDB" id="HostDB:ENSMUSG00000056167"/>
<dbReference type="eggNOG" id="KOG2471">
    <property type="taxonomic scope" value="Eukaryota"/>
</dbReference>
<dbReference type="GeneTree" id="ENSGT00390000001827"/>
<dbReference type="HOGENOM" id="CLU_013100_0_0_1"/>
<dbReference type="InParanoid" id="Q8BH15"/>
<dbReference type="OMA" id="PECSRMY"/>
<dbReference type="OrthoDB" id="25157at2759"/>
<dbReference type="PhylomeDB" id="Q8BH15"/>
<dbReference type="TreeFam" id="TF323368"/>
<dbReference type="Reactome" id="R-MMU-429947">
    <property type="pathway name" value="Deadenylation of mRNA"/>
</dbReference>
<dbReference type="Reactome" id="R-MMU-6804115">
    <property type="pathway name" value="TP53 regulates transcription of additional cell cycle genes whose exact role in the p53 pathway remain uncertain"/>
</dbReference>
<dbReference type="BioGRID-ORCS" id="78893">
    <property type="hits" value="23 hits in 79 CRISPR screens"/>
</dbReference>
<dbReference type="ChiTaRS" id="Cnot10">
    <property type="organism name" value="mouse"/>
</dbReference>
<dbReference type="PRO" id="PR:Q8BH15"/>
<dbReference type="Proteomes" id="UP000000589">
    <property type="component" value="Chromosome 9"/>
</dbReference>
<dbReference type="RNAct" id="Q8BH15">
    <property type="molecule type" value="protein"/>
</dbReference>
<dbReference type="Bgee" id="ENSMUSG00000056167">
    <property type="expression patterns" value="Expressed in floor plate of midbrain and 228 other cell types or tissues"/>
</dbReference>
<dbReference type="ExpressionAtlas" id="Q8BH15">
    <property type="expression patterns" value="baseline and differential"/>
</dbReference>
<dbReference type="GO" id="GO:0030014">
    <property type="term" value="C:CCR4-NOT complex"/>
    <property type="evidence" value="ECO:0000250"/>
    <property type="project" value="UniProtKB"/>
</dbReference>
<dbReference type="GO" id="GO:0005829">
    <property type="term" value="C:cytosol"/>
    <property type="evidence" value="ECO:0000304"/>
    <property type="project" value="Reactome"/>
</dbReference>
<dbReference type="GO" id="GO:0005634">
    <property type="term" value="C:nucleus"/>
    <property type="evidence" value="ECO:0007669"/>
    <property type="project" value="UniProtKB-SubCell"/>
</dbReference>
<dbReference type="GO" id="GO:0006417">
    <property type="term" value="P:regulation of translation"/>
    <property type="evidence" value="ECO:0007669"/>
    <property type="project" value="UniProtKB-KW"/>
</dbReference>
<dbReference type="GO" id="GO:0031047">
    <property type="term" value="P:regulatory ncRNA-mediated gene silencing"/>
    <property type="evidence" value="ECO:0007669"/>
    <property type="project" value="UniProtKB-KW"/>
</dbReference>
<dbReference type="FunFam" id="1.25.40.10:FF:000092">
    <property type="entry name" value="CCR4-NOT transcription complex subunit 10 isoform X1"/>
    <property type="match status" value="1"/>
</dbReference>
<dbReference type="Gene3D" id="1.25.40.10">
    <property type="entry name" value="Tetratricopeptide repeat domain"/>
    <property type="match status" value="2"/>
</dbReference>
<dbReference type="InterPro" id="IPR039740">
    <property type="entry name" value="CNOT10"/>
</dbReference>
<dbReference type="InterPro" id="IPR011990">
    <property type="entry name" value="TPR-like_helical_dom_sf"/>
</dbReference>
<dbReference type="InterPro" id="IPR019734">
    <property type="entry name" value="TPR_rpt"/>
</dbReference>
<dbReference type="PANTHER" id="PTHR12979">
    <property type="entry name" value="CCR4-NOT TRANSCRIPTION COMPLEX SUBUNIT 10"/>
    <property type="match status" value="1"/>
</dbReference>
<dbReference type="PANTHER" id="PTHR12979:SF5">
    <property type="entry name" value="CCR4-NOT TRANSCRIPTION COMPLEX SUBUNIT 10"/>
    <property type="match status" value="1"/>
</dbReference>
<dbReference type="SMART" id="SM00028">
    <property type="entry name" value="TPR"/>
    <property type="match status" value="4"/>
</dbReference>
<dbReference type="SUPFAM" id="SSF48452">
    <property type="entry name" value="TPR-like"/>
    <property type="match status" value="2"/>
</dbReference>
<keyword id="KW-0007">Acetylation</keyword>
<keyword id="KW-0025">Alternative splicing</keyword>
<keyword id="KW-0175">Coiled coil</keyword>
<keyword id="KW-0963">Cytoplasm</keyword>
<keyword id="KW-0539">Nucleus</keyword>
<keyword id="KW-1185">Reference proteome</keyword>
<keyword id="KW-0943">RNA-mediated gene silencing</keyword>
<keyword id="KW-0804">Transcription</keyword>
<keyword id="KW-0805">Transcription regulation</keyword>
<keyword id="KW-0810">Translation regulation</keyword>
<protein>
    <recommendedName>
        <fullName>CCR4-NOT transcription complex subunit 10</fullName>
    </recommendedName>
</protein>
<feature type="initiator methionine" description="Removed" evidence="2">
    <location>
        <position position="1"/>
    </location>
</feature>
<feature type="chain" id="PRO_0000314581" description="CCR4-NOT transcription complex subunit 10">
    <location>
        <begin position="2"/>
        <end position="744"/>
    </location>
</feature>
<feature type="region of interest" description="Disordered" evidence="4">
    <location>
        <begin position="1"/>
        <end position="26"/>
    </location>
</feature>
<feature type="region of interest" description="Disordered" evidence="4">
    <location>
        <begin position="182"/>
        <end position="203"/>
    </location>
</feature>
<feature type="region of interest" description="Disordered" evidence="4">
    <location>
        <begin position="475"/>
        <end position="521"/>
    </location>
</feature>
<feature type="region of interest" description="Disordered" evidence="4">
    <location>
        <begin position="602"/>
        <end position="634"/>
    </location>
</feature>
<feature type="coiled-coil region" evidence="3">
    <location>
        <begin position="73"/>
        <end position="107"/>
    </location>
</feature>
<feature type="compositionally biased region" description="Basic and acidic residues" evidence="4">
    <location>
        <begin position="1"/>
        <end position="16"/>
    </location>
</feature>
<feature type="compositionally biased region" description="Polar residues" evidence="4">
    <location>
        <begin position="484"/>
        <end position="495"/>
    </location>
</feature>
<feature type="compositionally biased region" description="Low complexity" evidence="4">
    <location>
        <begin position="496"/>
        <end position="506"/>
    </location>
</feature>
<feature type="compositionally biased region" description="Polar residues" evidence="4">
    <location>
        <begin position="602"/>
        <end position="612"/>
    </location>
</feature>
<feature type="modified residue" description="N-acetylalanine" evidence="2">
    <location>
        <position position="2"/>
    </location>
</feature>
<feature type="splice variant" id="VSP_030315" description="In isoform 6." evidence="5">
    <location>
        <begin position="1"/>
        <end position="644"/>
    </location>
</feature>
<feature type="splice variant" id="VSP_030316" description="In isoform 5." evidence="6">
    <original>GECLRCMFWNNLGCI</original>
    <variation>AQFGDFLLQEGSAGK</variation>
    <location>
        <begin position="288"/>
        <end position="302"/>
    </location>
</feature>
<feature type="splice variant" id="VSP_030317" description="In isoform 5." evidence="6">
    <location>
        <begin position="303"/>
        <end position="744"/>
    </location>
</feature>
<feature type="splice variant" id="VSP_030318" description="In isoform 2." evidence="6">
    <location>
        <position position="505"/>
    </location>
</feature>
<feature type="splice variant" id="VSP_030319" description="In isoform 4." evidence="5">
    <location>
        <begin position="533"/>
        <end position="744"/>
    </location>
</feature>
<feature type="splice variant" id="VSP_030320" description="In isoform 3." evidence="5">
    <location>
        <begin position="615"/>
        <end position="744"/>
    </location>
</feature>
<comment type="function">
    <text evidence="1">Component of the CCR4-NOT complex which is one of the major cellular mRNA deadenylases and is linked to various cellular processes including bulk mRNA degradation, miRNA-mediated repression, translational repression during translational initiation and general transcription regulation. Additional complex functions may be a consequence of its influence on mRNA expression. Is not required for association of CNOT7 to the CCR4-NOT complex (By similarity).</text>
</comment>
<comment type="subunit">
    <text evidence="1">Component of the CCR4-NOT complex; distinct complexes seem to exist that differ in the participation of probably mutually exclusive catalytic subunits. CNOT10 and CNOT11 form a subcomplex docked to the CNOT1 scaffold (By similarity).</text>
</comment>
<comment type="subcellular location">
    <subcellularLocation>
        <location evidence="1">Cytoplasm</location>
    </subcellularLocation>
    <subcellularLocation>
        <location evidence="1">Nucleus</location>
    </subcellularLocation>
</comment>
<comment type="alternative products">
    <event type="alternative splicing"/>
    <isoform>
        <id>Q8BH15-1</id>
        <name>1</name>
        <sequence type="displayed"/>
    </isoform>
    <isoform>
        <id>Q8BH15-2</id>
        <name>2</name>
        <sequence type="described" ref="VSP_030318"/>
    </isoform>
    <isoform>
        <id>Q8BH15-3</id>
        <name>3</name>
        <sequence type="described" ref="VSP_030320"/>
    </isoform>
    <isoform>
        <id>Q8BH15-4</id>
        <name>4</name>
        <sequence type="described" ref="VSP_030319"/>
    </isoform>
    <isoform>
        <id>Q8BH15-5</id>
        <name>5</name>
        <sequence type="described" ref="VSP_030316 VSP_030317"/>
    </isoform>
    <isoform>
        <id>Q8BH15-6</id>
        <name>6</name>
        <sequence type="described" ref="VSP_030315"/>
    </isoform>
</comment>
<comment type="similarity">
    <text evidence="7">Belongs to the CNOT10 family.</text>
</comment>
<proteinExistence type="evidence at protein level"/>
<gene>
    <name type="primary">Cnot10</name>
</gene>
<organism>
    <name type="scientific">Mus musculus</name>
    <name type="common">Mouse</name>
    <dbReference type="NCBI Taxonomy" id="10090"/>
    <lineage>
        <taxon>Eukaryota</taxon>
        <taxon>Metazoa</taxon>
        <taxon>Chordata</taxon>
        <taxon>Craniata</taxon>
        <taxon>Vertebrata</taxon>
        <taxon>Euteleostomi</taxon>
        <taxon>Mammalia</taxon>
        <taxon>Eutheria</taxon>
        <taxon>Euarchontoglires</taxon>
        <taxon>Glires</taxon>
        <taxon>Rodentia</taxon>
        <taxon>Myomorpha</taxon>
        <taxon>Muroidea</taxon>
        <taxon>Muridae</taxon>
        <taxon>Murinae</taxon>
        <taxon>Mus</taxon>
        <taxon>Mus</taxon>
    </lineage>
</organism>
<reference key="1">
    <citation type="journal article" date="2005" name="Science">
        <title>The transcriptional landscape of the mammalian genome.</title>
        <authorList>
            <person name="Carninci P."/>
            <person name="Kasukawa T."/>
            <person name="Katayama S."/>
            <person name="Gough J."/>
            <person name="Frith M.C."/>
            <person name="Maeda N."/>
            <person name="Oyama R."/>
            <person name="Ravasi T."/>
            <person name="Lenhard B."/>
            <person name="Wells C."/>
            <person name="Kodzius R."/>
            <person name="Shimokawa K."/>
            <person name="Bajic V.B."/>
            <person name="Brenner S.E."/>
            <person name="Batalov S."/>
            <person name="Forrest A.R."/>
            <person name="Zavolan M."/>
            <person name="Davis M.J."/>
            <person name="Wilming L.G."/>
            <person name="Aidinis V."/>
            <person name="Allen J.E."/>
            <person name="Ambesi-Impiombato A."/>
            <person name="Apweiler R."/>
            <person name="Aturaliya R.N."/>
            <person name="Bailey T.L."/>
            <person name="Bansal M."/>
            <person name="Baxter L."/>
            <person name="Beisel K.W."/>
            <person name="Bersano T."/>
            <person name="Bono H."/>
            <person name="Chalk A.M."/>
            <person name="Chiu K.P."/>
            <person name="Choudhary V."/>
            <person name="Christoffels A."/>
            <person name="Clutterbuck D.R."/>
            <person name="Crowe M.L."/>
            <person name="Dalla E."/>
            <person name="Dalrymple B.P."/>
            <person name="de Bono B."/>
            <person name="Della Gatta G."/>
            <person name="di Bernardo D."/>
            <person name="Down T."/>
            <person name="Engstrom P."/>
            <person name="Fagiolini M."/>
            <person name="Faulkner G."/>
            <person name="Fletcher C.F."/>
            <person name="Fukushima T."/>
            <person name="Furuno M."/>
            <person name="Futaki S."/>
            <person name="Gariboldi M."/>
            <person name="Georgii-Hemming P."/>
            <person name="Gingeras T.R."/>
            <person name="Gojobori T."/>
            <person name="Green R.E."/>
            <person name="Gustincich S."/>
            <person name="Harbers M."/>
            <person name="Hayashi Y."/>
            <person name="Hensch T.K."/>
            <person name="Hirokawa N."/>
            <person name="Hill D."/>
            <person name="Huminiecki L."/>
            <person name="Iacono M."/>
            <person name="Ikeo K."/>
            <person name="Iwama A."/>
            <person name="Ishikawa T."/>
            <person name="Jakt M."/>
            <person name="Kanapin A."/>
            <person name="Katoh M."/>
            <person name="Kawasawa Y."/>
            <person name="Kelso J."/>
            <person name="Kitamura H."/>
            <person name="Kitano H."/>
            <person name="Kollias G."/>
            <person name="Krishnan S.P."/>
            <person name="Kruger A."/>
            <person name="Kummerfeld S.K."/>
            <person name="Kurochkin I.V."/>
            <person name="Lareau L.F."/>
            <person name="Lazarevic D."/>
            <person name="Lipovich L."/>
            <person name="Liu J."/>
            <person name="Liuni S."/>
            <person name="McWilliam S."/>
            <person name="Madan Babu M."/>
            <person name="Madera M."/>
            <person name="Marchionni L."/>
            <person name="Matsuda H."/>
            <person name="Matsuzawa S."/>
            <person name="Miki H."/>
            <person name="Mignone F."/>
            <person name="Miyake S."/>
            <person name="Morris K."/>
            <person name="Mottagui-Tabar S."/>
            <person name="Mulder N."/>
            <person name="Nakano N."/>
            <person name="Nakauchi H."/>
            <person name="Ng P."/>
            <person name="Nilsson R."/>
            <person name="Nishiguchi S."/>
            <person name="Nishikawa S."/>
            <person name="Nori F."/>
            <person name="Ohara O."/>
            <person name="Okazaki Y."/>
            <person name="Orlando V."/>
            <person name="Pang K.C."/>
            <person name="Pavan W.J."/>
            <person name="Pavesi G."/>
            <person name="Pesole G."/>
            <person name="Petrovsky N."/>
            <person name="Piazza S."/>
            <person name="Reed J."/>
            <person name="Reid J.F."/>
            <person name="Ring B.Z."/>
            <person name="Ringwald M."/>
            <person name="Rost B."/>
            <person name="Ruan Y."/>
            <person name="Salzberg S.L."/>
            <person name="Sandelin A."/>
            <person name="Schneider C."/>
            <person name="Schoenbach C."/>
            <person name="Sekiguchi K."/>
            <person name="Semple C.A."/>
            <person name="Seno S."/>
            <person name="Sessa L."/>
            <person name="Sheng Y."/>
            <person name="Shibata Y."/>
            <person name="Shimada H."/>
            <person name="Shimada K."/>
            <person name="Silva D."/>
            <person name="Sinclair B."/>
            <person name="Sperling S."/>
            <person name="Stupka E."/>
            <person name="Sugiura K."/>
            <person name="Sultana R."/>
            <person name="Takenaka Y."/>
            <person name="Taki K."/>
            <person name="Tammoja K."/>
            <person name="Tan S.L."/>
            <person name="Tang S."/>
            <person name="Taylor M.S."/>
            <person name="Tegner J."/>
            <person name="Teichmann S.A."/>
            <person name="Ueda H.R."/>
            <person name="van Nimwegen E."/>
            <person name="Verardo R."/>
            <person name="Wei C.L."/>
            <person name="Yagi K."/>
            <person name="Yamanishi H."/>
            <person name="Zabarovsky E."/>
            <person name="Zhu S."/>
            <person name="Zimmer A."/>
            <person name="Hide W."/>
            <person name="Bult C."/>
            <person name="Grimmond S.M."/>
            <person name="Teasdale R.D."/>
            <person name="Liu E.T."/>
            <person name="Brusic V."/>
            <person name="Quackenbush J."/>
            <person name="Wahlestedt C."/>
            <person name="Mattick J.S."/>
            <person name="Hume D.A."/>
            <person name="Kai C."/>
            <person name="Sasaki D."/>
            <person name="Tomaru Y."/>
            <person name="Fukuda S."/>
            <person name="Kanamori-Katayama M."/>
            <person name="Suzuki M."/>
            <person name="Aoki J."/>
            <person name="Arakawa T."/>
            <person name="Iida J."/>
            <person name="Imamura K."/>
            <person name="Itoh M."/>
            <person name="Kato T."/>
            <person name="Kawaji H."/>
            <person name="Kawagashira N."/>
            <person name="Kawashima T."/>
            <person name="Kojima M."/>
            <person name="Kondo S."/>
            <person name="Konno H."/>
            <person name="Nakano K."/>
            <person name="Ninomiya N."/>
            <person name="Nishio T."/>
            <person name="Okada M."/>
            <person name="Plessy C."/>
            <person name="Shibata K."/>
            <person name="Shiraki T."/>
            <person name="Suzuki S."/>
            <person name="Tagami M."/>
            <person name="Waki K."/>
            <person name="Watahiki A."/>
            <person name="Okamura-Oho Y."/>
            <person name="Suzuki H."/>
            <person name="Kawai J."/>
            <person name="Hayashizaki Y."/>
        </authorList>
    </citation>
    <scope>NUCLEOTIDE SEQUENCE [LARGE SCALE MRNA] (ISOFORMS 1 AND 5)</scope>
    <scope>NUCLEOTIDE SEQUENCE [LARGE SCALE MRNA] OF 1-719 (ISOFORM 2)</scope>
    <source>
        <strain>C57BL/6J</strain>
        <tissue>Bone marrow</tissue>
        <tissue>Medulla oblongata</tissue>
        <tissue>Skin</tissue>
    </source>
</reference>
<reference key="2">
    <citation type="journal article" date="2004" name="Genome Res.">
        <title>The status, quality, and expansion of the NIH full-length cDNA project: the Mammalian Gene Collection (MGC).</title>
        <authorList>
            <consortium name="The MGC Project Team"/>
        </authorList>
    </citation>
    <scope>NUCLEOTIDE SEQUENCE [LARGE SCALE MRNA] (ISOFORMS 1; 3; 4 AND 6)</scope>
    <source>
        <strain>FVB/N</strain>
        <strain>FVB/N-3</strain>
        <tissue>Mammary tumor</tissue>
    </source>
</reference>
<reference key="3">
    <citation type="journal article" date="2010" name="Cell">
        <title>A tissue-specific atlas of mouse protein phosphorylation and expression.</title>
        <authorList>
            <person name="Huttlin E.L."/>
            <person name="Jedrychowski M.P."/>
            <person name="Elias J.E."/>
            <person name="Goswami T."/>
            <person name="Rad R."/>
            <person name="Beausoleil S.A."/>
            <person name="Villen J."/>
            <person name="Haas W."/>
            <person name="Sowa M.E."/>
            <person name="Gygi S.P."/>
        </authorList>
    </citation>
    <scope>IDENTIFICATION BY MASS SPECTROMETRY [LARGE SCALE ANALYSIS]</scope>
    <source>
        <tissue>Brain</tissue>
        <tissue>Kidney</tissue>
        <tissue>Liver</tissue>
        <tissue>Lung</tissue>
        <tissue>Spleen</tissue>
        <tissue>Testis</tissue>
    </source>
</reference>
<accession>Q8BH15</accession>
<accession>Q05CH8</accession>
<accession>Q3TSS4</accession>
<accession>Q3UDS5</accession>
<accession>Q80VN2</accession>
<accession>Q8CI74</accession>
<name>CNO10_MOUSE</name>